<evidence type="ECO:0000255" key="1">
    <source>
        <dbReference type="HAMAP-Rule" id="MF_01341"/>
    </source>
</evidence>
<evidence type="ECO:0000256" key="2">
    <source>
        <dbReference type="SAM" id="MobiDB-lite"/>
    </source>
</evidence>
<evidence type="ECO:0000305" key="3"/>
<dbReference type="EMBL" id="AE017243">
    <property type="protein sequence ID" value="AAZ44263.2"/>
    <property type="molecule type" value="Genomic_DNA"/>
</dbReference>
<dbReference type="RefSeq" id="WP_044284598.1">
    <property type="nucleotide sequence ID" value="NC_007295.1"/>
</dbReference>
<dbReference type="SMR" id="Q4AAF8"/>
<dbReference type="GeneID" id="41334475"/>
<dbReference type="KEGG" id="mhj:MHJ_0172"/>
<dbReference type="eggNOG" id="COG0200">
    <property type="taxonomic scope" value="Bacteria"/>
</dbReference>
<dbReference type="HOGENOM" id="CLU_055188_4_1_14"/>
<dbReference type="OrthoDB" id="9810293at2"/>
<dbReference type="Proteomes" id="UP000000548">
    <property type="component" value="Chromosome"/>
</dbReference>
<dbReference type="GO" id="GO:0022625">
    <property type="term" value="C:cytosolic large ribosomal subunit"/>
    <property type="evidence" value="ECO:0007669"/>
    <property type="project" value="TreeGrafter"/>
</dbReference>
<dbReference type="GO" id="GO:0019843">
    <property type="term" value="F:rRNA binding"/>
    <property type="evidence" value="ECO:0007669"/>
    <property type="project" value="UniProtKB-UniRule"/>
</dbReference>
<dbReference type="GO" id="GO:0003735">
    <property type="term" value="F:structural constituent of ribosome"/>
    <property type="evidence" value="ECO:0007669"/>
    <property type="project" value="InterPro"/>
</dbReference>
<dbReference type="GO" id="GO:0006412">
    <property type="term" value="P:translation"/>
    <property type="evidence" value="ECO:0007669"/>
    <property type="project" value="UniProtKB-UniRule"/>
</dbReference>
<dbReference type="Gene3D" id="3.100.10.10">
    <property type="match status" value="1"/>
</dbReference>
<dbReference type="HAMAP" id="MF_01341">
    <property type="entry name" value="Ribosomal_uL15"/>
    <property type="match status" value="1"/>
</dbReference>
<dbReference type="InterPro" id="IPR030878">
    <property type="entry name" value="Ribosomal_uL15"/>
</dbReference>
<dbReference type="InterPro" id="IPR021131">
    <property type="entry name" value="Ribosomal_uL15/eL18"/>
</dbReference>
<dbReference type="InterPro" id="IPR036227">
    <property type="entry name" value="Ribosomal_uL15/eL18_sf"/>
</dbReference>
<dbReference type="InterPro" id="IPR005749">
    <property type="entry name" value="Ribosomal_uL15_bac-type"/>
</dbReference>
<dbReference type="InterPro" id="IPR001196">
    <property type="entry name" value="Ribosomal_uL15_CS"/>
</dbReference>
<dbReference type="NCBIfam" id="TIGR01071">
    <property type="entry name" value="rplO_bact"/>
    <property type="match status" value="1"/>
</dbReference>
<dbReference type="PANTHER" id="PTHR12934">
    <property type="entry name" value="50S RIBOSOMAL PROTEIN L15"/>
    <property type="match status" value="1"/>
</dbReference>
<dbReference type="PANTHER" id="PTHR12934:SF11">
    <property type="entry name" value="LARGE RIBOSOMAL SUBUNIT PROTEIN UL15M"/>
    <property type="match status" value="1"/>
</dbReference>
<dbReference type="Pfam" id="PF00828">
    <property type="entry name" value="Ribosomal_L27A"/>
    <property type="match status" value="1"/>
</dbReference>
<dbReference type="SUPFAM" id="SSF52080">
    <property type="entry name" value="Ribosomal proteins L15p and L18e"/>
    <property type="match status" value="1"/>
</dbReference>
<dbReference type="PROSITE" id="PS00475">
    <property type="entry name" value="RIBOSOMAL_L15"/>
    <property type="match status" value="1"/>
</dbReference>
<gene>
    <name evidence="1" type="primary">rplO</name>
    <name type="ordered locus">MHJ_0172</name>
</gene>
<feature type="chain" id="PRO_0000104761" description="Large ribosomal subunit protein uL15">
    <location>
        <begin position="1"/>
        <end position="147"/>
    </location>
</feature>
<feature type="region of interest" description="Disordered" evidence="2">
    <location>
        <begin position="1"/>
        <end position="46"/>
    </location>
</feature>
<feature type="compositionally biased region" description="Basic residues" evidence="2">
    <location>
        <begin position="16"/>
        <end position="28"/>
    </location>
</feature>
<proteinExistence type="inferred from homology"/>
<reference key="1">
    <citation type="journal article" date="2005" name="J. Bacteriol.">
        <title>Swine and poultry pathogens: the complete genome sequences of two strains of Mycoplasma hyopneumoniae and a strain of Mycoplasma synoviae.</title>
        <authorList>
            <person name="Vasconcelos A.T.R."/>
            <person name="Ferreira H.B."/>
            <person name="Bizarro C.V."/>
            <person name="Bonatto S.L."/>
            <person name="Carvalho M.O."/>
            <person name="Pinto P.M."/>
            <person name="Almeida D.F."/>
            <person name="Almeida L.G.P."/>
            <person name="Almeida R."/>
            <person name="Alves-Junior L."/>
            <person name="Assuncao E.N."/>
            <person name="Azevedo V.A.C."/>
            <person name="Bogo M.R."/>
            <person name="Brigido M.M."/>
            <person name="Brocchi M."/>
            <person name="Burity H.A."/>
            <person name="Camargo A.A."/>
            <person name="Camargo S.S."/>
            <person name="Carepo M.S."/>
            <person name="Carraro D.M."/>
            <person name="de Mattos Cascardo J.C."/>
            <person name="Castro L.A."/>
            <person name="Cavalcanti G."/>
            <person name="Chemale G."/>
            <person name="Collevatti R.G."/>
            <person name="Cunha C.W."/>
            <person name="Dallagiovanna B."/>
            <person name="Dambros B.P."/>
            <person name="Dellagostin O.A."/>
            <person name="Falcao C."/>
            <person name="Fantinatti-Garboggini F."/>
            <person name="Felipe M.S.S."/>
            <person name="Fiorentin L."/>
            <person name="Franco G.R."/>
            <person name="Freitas N.S.A."/>
            <person name="Frias D."/>
            <person name="Grangeiro T.B."/>
            <person name="Grisard E.C."/>
            <person name="Guimaraes C.T."/>
            <person name="Hungria M."/>
            <person name="Jardim S.N."/>
            <person name="Krieger M.A."/>
            <person name="Laurino J.P."/>
            <person name="Lima L.F.A."/>
            <person name="Lopes M.I."/>
            <person name="Loreto E.L.S."/>
            <person name="Madeira H.M.F."/>
            <person name="Manfio G.P."/>
            <person name="Maranhao A.Q."/>
            <person name="Martinkovics C.T."/>
            <person name="Medeiros S.R.B."/>
            <person name="Moreira M.A.M."/>
            <person name="Neiva M."/>
            <person name="Ramalho-Neto C.E."/>
            <person name="Nicolas M.F."/>
            <person name="Oliveira S.C."/>
            <person name="Paixao R.F.C."/>
            <person name="Pedrosa F.O."/>
            <person name="Pena S.D.J."/>
            <person name="Pereira M."/>
            <person name="Pereira-Ferrari L."/>
            <person name="Piffer I."/>
            <person name="Pinto L.S."/>
            <person name="Potrich D.P."/>
            <person name="Salim A.C.M."/>
            <person name="Santos F.R."/>
            <person name="Schmitt R."/>
            <person name="Schneider M.P.C."/>
            <person name="Schrank A."/>
            <person name="Schrank I.S."/>
            <person name="Schuck A.F."/>
            <person name="Seuanez H.N."/>
            <person name="Silva D.W."/>
            <person name="Silva R."/>
            <person name="Silva S.C."/>
            <person name="Soares C.M.A."/>
            <person name="Souza K.R.L."/>
            <person name="Souza R.C."/>
            <person name="Staats C.C."/>
            <person name="Steffens M.B.R."/>
            <person name="Teixeira S.M.R."/>
            <person name="Urmenyi T.P."/>
            <person name="Vainstein M.H."/>
            <person name="Zuccherato L.W."/>
            <person name="Simpson A.J.G."/>
            <person name="Zaha A."/>
        </authorList>
    </citation>
    <scope>NUCLEOTIDE SEQUENCE [LARGE SCALE GENOMIC DNA]</scope>
    <source>
        <strain>J / ATCC 25934 / NCTC 10110</strain>
    </source>
</reference>
<sequence>MSIRLENLSYTPGARKEKHRKGRGHAAGKGKQAGRGQSGQKKRSTVRLGFEGGQNPWFRRVPKRGFRNFNKKEYEIFNISDLESRYQDGDTVSLESLYLKKVLKKRNMKAKLLANGDLTKKLTVTTNAFSIAAQKKIEEKGGKIEVR</sequence>
<protein>
    <recommendedName>
        <fullName evidence="1">Large ribosomal subunit protein uL15</fullName>
    </recommendedName>
    <alternativeName>
        <fullName evidence="3">50S ribosomal protein L15</fullName>
    </alternativeName>
</protein>
<accession>Q4AAF8</accession>
<name>RL15_MESHJ</name>
<organism>
    <name type="scientific">Mesomycoplasma hyopneumoniae (strain J / ATCC 25934 / NCTC 10110)</name>
    <name type="common">Mycoplasma hyopneumoniae</name>
    <dbReference type="NCBI Taxonomy" id="262719"/>
    <lineage>
        <taxon>Bacteria</taxon>
        <taxon>Bacillati</taxon>
        <taxon>Mycoplasmatota</taxon>
        <taxon>Mycoplasmoidales</taxon>
        <taxon>Metamycoplasmataceae</taxon>
        <taxon>Mesomycoplasma</taxon>
    </lineage>
</organism>
<keyword id="KW-0687">Ribonucleoprotein</keyword>
<keyword id="KW-0689">Ribosomal protein</keyword>
<keyword id="KW-0694">RNA-binding</keyword>
<keyword id="KW-0699">rRNA-binding</keyword>
<comment type="function">
    <text evidence="1">Binds to the 23S rRNA.</text>
</comment>
<comment type="subunit">
    <text evidence="1">Part of the 50S ribosomal subunit.</text>
</comment>
<comment type="similarity">
    <text evidence="1">Belongs to the universal ribosomal protein uL15 family.</text>
</comment>